<proteinExistence type="inferred from homology"/>
<protein>
    <recommendedName>
        <fullName evidence="1">Large ribosomal subunit protein uL29</fullName>
    </recommendedName>
    <alternativeName>
        <fullName evidence="2">50S ribosomal protein L29</fullName>
    </alternativeName>
</protein>
<dbReference type="EMBL" id="AE017262">
    <property type="protein sequence ID" value="AAT05362.1"/>
    <property type="molecule type" value="Genomic_DNA"/>
</dbReference>
<dbReference type="RefSeq" id="WP_003720942.1">
    <property type="nucleotide sequence ID" value="NC_002973.6"/>
</dbReference>
<dbReference type="SMR" id="Q71WF4"/>
<dbReference type="GeneID" id="93240505"/>
<dbReference type="KEGG" id="lmf:LMOf2365_2597"/>
<dbReference type="HOGENOM" id="CLU_158491_5_2_9"/>
<dbReference type="GO" id="GO:0022625">
    <property type="term" value="C:cytosolic large ribosomal subunit"/>
    <property type="evidence" value="ECO:0007669"/>
    <property type="project" value="TreeGrafter"/>
</dbReference>
<dbReference type="GO" id="GO:0003735">
    <property type="term" value="F:structural constituent of ribosome"/>
    <property type="evidence" value="ECO:0007669"/>
    <property type="project" value="InterPro"/>
</dbReference>
<dbReference type="GO" id="GO:0006412">
    <property type="term" value="P:translation"/>
    <property type="evidence" value="ECO:0007669"/>
    <property type="project" value="UniProtKB-UniRule"/>
</dbReference>
<dbReference type="CDD" id="cd00427">
    <property type="entry name" value="Ribosomal_L29_HIP"/>
    <property type="match status" value="1"/>
</dbReference>
<dbReference type="FunFam" id="1.10.287.310:FF:000001">
    <property type="entry name" value="50S ribosomal protein L29"/>
    <property type="match status" value="1"/>
</dbReference>
<dbReference type="Gene3D" id="1.10.287.310">
    <property type="match status" value="1"/>
</dbReference>
<dbReference type="HAMAP" id="MF_00374">
    <property type="entry name" value="Ribosomal_uL29"/>
    <property type="match status" value="1"/>
</dbReference>
<dbReference type="InterPro" id="IPR050063">
    <property type="entry name" value="Ribosomal_protein_uL29"/>
</dbReference>
<dbReference type="InterPro" id="IPR001854">
    <property type="entry name" value="Ribosomal_uL29"/>
</dbReference>
<dbReference type="InterPro" id="IPR018254">
    <property type="entry name" value="Ribosomal_uL29_CS"/>
</dbReference>
<dbReference type="InterPro" id="IPR036049">
    <property type="entry name" value="Ribosomal_uL29_sf"/>
</dbReference>
<dbReference type="NCBIfam" id="TIGR00012">
    <property type="entry name" value="L29"/>
    <property type="match status" value="1"/>
</dbReference>
<dbReference type="PANTHER" id="PTHR10916">
    <property type="entry name" value="60S RIBOSOMAL PROTEIN L35/50S RIBOSOMAL PROTEIN L29"/>
    <property type="match status" value="1"/>
</dbReference>
<dbReference type="PANTHER" id="PTHR10916:SF0">
    <property type="entry name" value="LARGE RIBOSOMAL SUBUNIT PROTEIN UL29C"/>
    <property type="match status" value="1"/>
</dbReference>
<dbReference type="Pfam" id="PF00831">
    <property type="entry name" value="Ribosomal_L29"/>
    <property type="match status" value="1"/>
</dbReference>
<dbReference type="SUPFAM" id="SSF46561">
    <property type="entry name" value="Ribosomal protein L29 (L29p)"/>
    <property type="match status" value="1"/>
</dbReference>
<dbReference type="PROSITE" id="PS00579">
    <property type="entry name" value="RIBOSOMAL_L29"/>
    <property type="match status" value="1"/>
</dbReference>
<name>RL29_LISMF</name>
<feature type="chain" id="PRO_0000130413" description="Large ribosomal subunit protein uL29">
    <location>
        <begin position="1"/>
        <end position="63"/>
    </location>
</feature>
<reference key="1">
    <citation type="journal article" date="2004" name="Nucleic Acids Res.">
        <title>Whole genome comparisons of serotype 4b and 1/2a strains of the food-borne pathogen Listeria monocytogenes reveal new insights into the core genome components of this species.</title>
        <authorList>
            <person name="Nelson K.E."/>
            <person name="Fouts D.E."/>
            <person name="Mongodin E.F."/>
            <person name="Ravel J."/>
            <person name="DeBoy R.T."/>
            <person name="Kolonay J.F."/>
            <person name="Rasko D.A."/>
            <person name="Angiuoli S.V."/>
            <person name="Gill S.R."/>
            <person name="Paulsen I.T."/>
            <person name="Peterson J.D."/>
            <person name="White O."/>
            <person name="Nelson W.C."/>
            <person name="Nierman W.C."/>
            <person name="Beanan M.J."/>
            <person name="Brinkac L.M."/>
            <person name="Daugherty S.C."/>
            <person name="Dodson R.J."/>
            <person name="Durkin A.S."/>
            <person name="Madupu R."/>
            <person name="Haft D.H."/>
            <person name="Selengut J."/>
            <person name="Van Aken S.E."/>
            <person name="Khouri H.M."/>
            <person name="Fedorova N."/>
            <person name="Forberger H.A."/>
            <person name="Tran B."/>
            <person name="Kathariou S."/>
            <person name="Wonderling L.D."/>
            <person name="Uhlich G.A."/>
            <person name="Bayles D.O."/>
            <person name="Luchansky J.B."/>
            <person name="Fraser C.M."/>
        </authorList>
    </citation>
    <scope>NUCLEOTIDE SEQUENCE [LARGE SCALE GENOMIC DNA]</scope>
    <source>
        <strain>F2365</strain>
    </source>
</reference>
<organism>
    <name type="scientific">Listeria monocytogenes serotype 4b (strain F2365)</name>
    <dbReference type="NCBI Taxonomy" id="265669"/>
    <lineage>
        <taxon>Bacteria</taxon>
        <taxon>Bacillati</taxon>
        <taxon>Bacillota</taxon>
        <taxon>Bacilli</taxon>
        <taxon>Bacillales</taxon>
        <taxon>Listeriaceae</taxon>
        <taxon>Listeria</taxon>
    </lineage>
</organism>
<sequence length="63" mass="7402">MKANDIRDLSTTEIQDQEKALKEELFNLRFQLATGQLENTARIREVRKAIARMKTIVRERELA</sequence>
<keyword id="KW-0687">Ribonucleoprotein</keyword>
<keyword id="KW-0689">Ribosomal protein</keyword>
<comment type="similarity">
    <text evidence="1">Belongs to the universal ribosomal protein uL29 family.</text>
</comment>
<gene>
    <name evidence="1" type="primary">rpmC</name>
    <name type="ordered locus">LMOf2365_2597</name>
</gene>
<accession>Q71WF4</accession>
<evidence type="ECO:0000255" key="1">
    <source>
        <dbReference type="HAMAP-Rule" id="MF_00374"/>
    </source>
</evidence>
<evidence type="ECO:0000305" key="2"/>